<dbReference type="EC" id="1.14.-.-"/>
<dbReference type="EMBL" id="AE009442">
    <property type="protein sequence ID" value="AAO29542.1"/>
    <property type="molecule type" value="Genomic_DNA"/>
</dbReference>
<dbReference type="RefSeq" id="WP_011098220.1">
    <property type="nucleotide sequence ID" value="NC_004556.1"/>
</dbReference>
<dbReference type="SMR" id="Q87AV9"/>
<dbReference type="KEGG" id="xft:PD_1704"/>
<dbReference type="HOGENOM" id="CLU_033716_0_2_6"/>
<dbReference type="Proteomes" id="UP000002516">
    <property type="component" value="Chromosome"/>
</dbReference>
<dbReference type="GO" id="GO:0020037">
    <property type="term" value="F:heme binding"/>
    <property type="evidence" value="ECO:0007669"/>
    <property type="project" value="InterPro"/>
</dbReference>
<dbReference type="GO" id="GO:0005506">
    <property type="term" value="F:iron ion binding"/>
    <property type="evidence" value="ECO:0007669"/>
    <property type="project" value="InterPro"/>
</dbReference>
<dbReference type="GO" id="GO:0004497">
    <property type="term" value="F:monooxygenase activity"/>
    <property type="evidence" value="ECO:0007669"/>
    <property type="project" value="UniProtKB-KW"/>
</dbReference>
<dbReference type="GO" id="GO:0016705">
    <property type="term" value="F:oxidoreductase activity, acting on paired donors, with incorporation or reduction of molecular oxygen"/>
    <property type="evidence" value="ECO:0007669"/>
    <property type="project" value="InterPro"/>
</dbReference>
<dbReference type="CDD" id="cd20625">
    <property type="entry name" value="CYP164-like"/>
    <property type="match status" value="1"/>
</dbReference>
<dbReference type="FunFam" id="1.10.630.10:FF:000018">
    <property type="entry name" value="Cytochrome P450 monooxygenase"/>
    <property type="match status" value="1"/>
</dbReference>
<dbReference type="Gene3D" id="1.10.630.10">
    <property type="entry name" value="Cytochrome P450"/>
    <property type="match status" value="1"/>
</dbReference>
<dbReference type="InterPro" id="IPR001128">
    <property type="entry name" value="Cyt_P450"/>
</dbReference>
<dbReference type="InterPro" id="IPR002397">
    <property type="entry name" value="Cyt_P450_B"/>
</dbReference>
<dbReference type="InterPro" id="IPR017972">
    <property type="entry name" value="Cyt_P450_CS"/>
</dbReference>
<dbReference type="InterPro" id="IPR036396">
    <property type="entry name" value="Cyt_P450_sf"/>
</dbReference>
<dbReference type="PANTHER" id="PTHR46696:SF1">
    <property type="entry name" value="CYTOCHROME P450 YJIB-RELATED"/>
    <property type="match status" value="1"/>
</dbReference>
<dbReference type="PANTHER" id="PTHR46696">
    <property type="entry name" value="P450, PUTATIVE (EUROFUNG)-RELATED"/>
    <property type="match status" value="1"/>
</dbReference>
<dbReference type="Pfam" id="PF00067">
    <property type="entry name" value="p450"/>
    <property type="match status" value="1"/>
</dbReference>
<dbReference type="PRINTS" id="PR00359">
    <property type="entry name" value="BP450"/>
</dbReference>
<dbReference type="SUPFAM" id="SSF48264">
    <property type="entry name" value="Cytochrome P450"/>
    <property type="match status" value="1"/>
</dbReference>
<dbReference type="PROSITE" id="PS00086">
    <property type="entry name" value="CYTOCHROME_P450"/>
    <property type="match status" value="1"/>
</dbReference>
<organism>
    <name type="scientific">Xylella fastidiosa (strain Temecula1 / ATCC 700964)</name>
    <dbReference type="NCBI Taxonomy" id="183190"/>
    <lineage>
        <taxon>Bacteria</taxon>
        <taxon>Pseudomonadati</taxon>
        <taxon>Pseudomonadota</taxon>
        <taxon>Gammaproteobacteria</taxon>
        <taxon>Lysobacterales</taxon>
        <taxon>Lysobacteraceae</taxon>
        <taxon>Xylella</taxon>
    </lineage>
</organism>
<keyword id="KW-0349">Heme</keyword>
<keyword id="KW-0408">Iron</keyword>
<keyword id="KW-0479">Metal-binding</keyword>
<keyword id="KW-0503">Monooxygenase</keyword>
<keyword id="KW-0560">Oxidoreductase</keyword>
<keyword id="KW-1185">Reference proteome</keyword>
<feature type="chain" id="PRO_0000052291" description="Putative cytochrome P450 133B2">
    <location>
        <begin position="1"/>
        <end position="399"/>
    </location>
</feature>
<feature type="binding site" description="axial binding residue" evidence="1">
    <location>
        <position position="348"/>
    </location>
    <ligand>
        <name>heme</name>
        <dbReference type="ChEBI" id="CHEBI:30413"/>
    </ligand>
    <ligandPart>
        <name>Fe</name>
        <dbReference type="ChEBI" id="CHEBI:18248"/>
    </ligandPart>
</feature>
<sequence length="399" mass="44684">MKLADLSSPAFLENPYPLYETLRRQGPFVSIGPNALMTGRYSIVDGLLHNRNMGKSYMESIRVRYGDDALDMPLFQGFNRMFLMLNPPVHTHLRGLVMQAFTGRESESMRPLAIDTAHRLIDDFEQKSSVDLVTEFSFPLPMRIICRMMDVDISDAISLSVAVSNLAKVFDPAPMSPDELVHASAAYEELAHYFTRLIELRRAQHGTDLISMLLRAEEEGQKLTHDEIVSNVILLLLGGYETTSNMIGNALIALHRHPKQLARLKSDLSLMPQAVLECLRYDGSVQFTIRAAMDDVSIEGDVVPRGTIVFLMLGAANRDPAQFTDPDHLEITRKQGRLQSFGAGVHHCLGYRLALVELECALTVLLERLPHLRLANLDTLSWNQRGNLRGVNALIADLH</sequence>
<comment type="cofactor">
    <cofactor evidence="1">
        <name>heme</name>
        <dbReference type="ChEBI" id="CHEBI:30413"/>
    </cofactor>
</comment>
<comment type="similarity">
    <text evidence="2">Belongs to the cytochrome P450 family.</text>
</comment>
<reference key="1">
    <citation type="journal article" date="2003" name="J. Bacteriol.">
        <title>Comparative analyses of the complete genome sequences of Pierce's disease and citrus variegated chlorosis strains of Xylella fastidiosa.</title>
        <authorList>
            <person name="Van Sluys M.A."/>
            <person name="de Oliveira M.C."/>
            <person name="Monteiro-Vitorello C.B."/>
            <person name="Miyaki C.Y."/>
            <person name="Furlan L.R."/>
            <person name="Camargo L.E.A."/>
            <person name="da Silva A.C.R."/>
            <person name="Moon D.H."/>
            <person name="Takita M.A."/>
            <person name="Lemos E.G.M."/>
            <person name="Machado M.A."/>
            <person name="Ferro M.I.T."/>
            <person name="da Silva F.R."/>
            <person name="Goldman M.H.S."/>
            <person name="Goldman G.H."/>
            <person name="Lemos M.V.F."/>
            <person name="El-Dorry H."/>
            <person name="Tsai S.M."/>
            <person name="Carrer H."/>
            <person name="Carraro D.M."/>
            <person name="de Oliveira R.C."/>
            <person name="Nunes L.R."/>
            <person name="Siqueira W.J."/>
            <person name="Coutinho L.L."/>
            <person name="Kimura E.T."/>
            <person name="Ferro E.S."/>
            <person name="Harakava R."/>
            <person name="Kuramae E.E."/>
            <person name="Marino C.L."/>
            <person name="Giglioti E."/>
            <person name="Abreu I.L."/>
            <person name="Alves L.M.C."/>
            <person name="do Amaral A.M."/>
            <person name="Baia G.S."/>
            <person name="Blanco S.R."/>
            <person name="Brito M.S."/>
            <person name="Cannavan F.S."/>
            <person name="Celestino A.V."/>
            <person name="da Cunha A.F."/>
            <person name="Fenille R.C."/>
            <person name="Ferro J.A."/>
            <person name="Formighieri E.F."/>
            <person name="Kishi L.T."/>
            <person name="Leoni S.G."/>
            <person name="Oliveira A.R."/>
            <person name="Rosa V.E. Jr."/>
            <person name="Sassaki F.T."/>
            <person name="Sena J.A.D."/>
            <person name="de Souza A.A."/>
            <person name="Truffi D."/>
            <person name="Tsukumo F."/>
            <person name="Yanai G.M."/>
            <person name="Zaros L.G."/>
            <person name="Civerolo E.L."/>
            <person name="Simpson A.J.G."/>
            <person name="Almeida N.F. Jr."/>
            <person name="Setubal J.C."/>
            <person name="Kitajima J.P."/>
        </authorList>
    </citation>
    <scope>NUCLEOTIDE SEQUENCE [LARGE SCALE GENOMIC DNA]</scope>
    <source>
        <strain>Temecula1 / ATCC 700964</strain>
    </source>
</reference>
<name>C1332_XYLFT</name>
<gene>
    <name type="primary">cyp133B2</name>
    <name type="ordered locus">PD_1704</name>
</gene>
<proteinExistence type="inferred from homology"/>
<accession>Q87AV9</accession>
<evidence type="ECO:0000250" key="1"/>
<evidence type="ECO:0000305" key="2"/>
<protein>
    <recommendedName>
        <fullName>Putative cytochrome P450 133B2</fullName>
        <ecNumber>1.14.-.-</ecNumber>
    </recommendedName>
</protein>